<keyword id="KW-0240">DNA-directed RNA polymerase</keyword>
<keyword id="KW-0548">Nucleotidyltransferase</keyword>
<keyword id="KW-0804">Transcription</keyword>
<keyword id="KW-0808">Transferase</keyword>
<reference key="1">
    <citation type="journal article" date="2008" name="PLoS ONE">
        <title>Genome sequence of a lancefield group C Streptococcus zooepidemicus strain causing epidemic nephritis: new information about an old disease.</title>
        <authorList>
            <person name="Beres S.B."/>
            <person name="Sesso R."/>
            <person name="Pinto S.W.L."/>
            <person name="Hoe N.P."/>
            <person name="Porcella S.F."/>
            <person name="Deleo F.R."/>
            <person name="Musser J.M."/>
        </authorList>
    </citation>
    <scope>NUCLEOTIDE SEQUENCE [LARGE SCALE GENOMIC DNA]</scope>
    <source>
        <strain>MGCS10565</strain>
    </source>
</reference>
<sequence length="76" mass="9123">MIYKVFYQETKERSPRRENTQALYLDIDAASELEGRIKARKMVEEHTDYNVEFIELLSDKHLDYEKETGVFTLTEF</sequence>
<proteinExistence type="inferred from homology"/>
<name>RPOY_STREM</name>
<protein>
    <recommendedName>
        <fullName evidence="1">DNA-directed RNA polymerase subunit epsilon</fullName>
        <shortName evidence="1">RNAP epsilon subunit</shortName>
        <ecNumber evidence="1">2.7.7.6</ecNumber>
    </recommendedName>
    <alternativeName>
        <fullName evidence="1">RNA polymerase epsilon subunit</fullName>
    </alternativeName>
    <alternativeName>
        <fullName evidence="1">Transcriptase subunit epsilon</fullName>
    </alternativeName>
</protein>
<accession>B4U0X4</accession>
<comment type="function">
    <text evidence="1">A non-essential component of RNA polymerase (RNAP).</text>
</comment>
<comment type="catalytic activity">
    <reaction evidence="1">
        <text>RNA(n) + a ribonucleoside 5'-triphosphate = RNA(n+1) + diphosphate</text>
        <dbReference type="Rhea" id="RHEA:21248"/>
        <dbReference type="Rhea" id="RHEA-COMP:14527"/>
        <dbReference type="Rhea" id="RHEA-COMP:17342"/>
        <dbReference type="ChEBI" id="CHEBI:33019"/>
        <dbReference type="ChEBI" id="CHEBI:61557"/>
        <dbReference type="ChEBI" id="CHEBI:140395"/>
        <dbReference type="EC" id="2.7.7.6"/>
    </reaction>
</comment>
<comment type="subunit">
    <text evidence="1">RNAP is composed of a core of 2 alpha, a beta and a beta' subunit. The core is associated with a delta subunit, and at least one of epsilon or omega. When a sigma factor is associated with the core the holoenzyme is formed, which can initiate transcription.</text>
</comment>
<comment type="similarity">
    <text evidence="1">Belongs to the RNA polymerase subunit epsilon family.</text>
</comment>
<dbReference type="EC" id="2.7.7.6" evidence="1"/>
<dbReference type="EMBL" id="CP001129">
    <property type="protein sequence ID" value="ACG61661.1"/>
    <property type="molecule type" value="Genomic_DNA"/>
</dbReference>
<dbReference type="RefSeq" id="WP_012514942.1">
    <property type="nucleotide sequence ID" value="NC_011134.1"/>
</dbReference>
<dbReference type="SMR" id="B4U0X4"/>
<dbReference type="KEGG" id="sez:Sez_0285"/>
<dbReference type="HOGENOM" id="CLU_187518_0_0_9"/>
<dbReference type="Proteomes" id="UP000001873">
    <property type="component" value="Chromosome"/>
</dbReference>
<dbReference type="GO" id="GO:0000428">
    <property type="term" value="C:DNA-directed RNA polymerase complex"/>
    <property type="evidence" value="ECO:0007669"/>
    <property type="project" value="UniProtKB-KW"/>
</dbReference>
<dbReference type="GO" id="GO:0003677">
    <property type="term" value="F:DNA binding"/>
    <property type="evidence" value="ECO:0007669"/>
    <property type="project" value="UniProtKB-UniRule"/>
</dbReference>
<dbReference type="GO" id="GO:0003899">
    <property type="term" value="F:DNA-directed RNA polymerase activity"/>
    <property type="evidence" value="ECO:0007669"/>
    <property type="project" value="UniProtKB-UniRule"/>
</dbReference>
<dbReference type="GO" id="GO:0006351">
    <property type="term" value="P:DNA-templated transcription"/>
    <property type="evidence" value="ECO:0007669"/>
    <property type="project" value="UniProtKB-UniRule"/>
</dbReference>
<dbReference type="Gene3D" id="3.10.20.730">
    <property type="entry name" value="RNAP, epsilon subunit-like"/>
    <property type="match status" value="1"/>
</dbReference>
<dbReference type="HAMAP" id="MF_01553">
    <property type="entry name" value="RNApol_bact_RpoY"/>
    <property type="match status" value="1"/>
</dbReference>
<dbReference type="InterPro" id="IPR009907">
    <property type="entry name" value="RpoY"/>
</dbReference>
<dbReference type="NCBIfam" id="NF010188">
    <property type="entry name" value="PRK13667.1"/>
    <property type="match status" value="1"/>
</dbReference>
<dbReference type="Pfam" id="PF07288">
    <property type="entry name" value="RpoY"/>
    <property type="match status" value="1"/>
</dbReference>
<organism>
    <name type="scientific">Streptococcus equi subsp. zooepidemicus (strain MGCS10565)</name>
    <dbReference type="NCBI Taxonomy" id="552526"/>
    <lineage>
        <taxon>Bacteria</taxon>
        <taxon>Bacillati</taxon>
        <taxon>Bacillota</taxon>
        <taxon>Bacilli</taxon>
        <taxon>Lactobacillales</taxon>
        <taxon>Streptococcaceae</taxon>
        <taxon>Streptococcus</taxon>
    </lineage>
</organism>
<evidence type="ECO:0000255" key="1">
    <source>
        <dbReference type="HAMAP-Rule" id="MF_01553"/>
    </source>
</evidence>
<feature type="chain" id="PRO_1000199621" description="DNA-directed RNA polymerase subunit epsilon">
    <location>
        <begin position="1"/>
        <end position="76"/>
    </location>
</feature>
<gene>
    <name evidence="1" type="primary">rpoY</name>
    <name type="ordered locus">Sez_0285</name>
</gene>